<dbReference type="GO" id="GO:0005576">
    <property type="term" value="C:extracellular region"/>
    <property type="evidence" value="ECO:0007669"/>
    <property type="project" value="UniProtKB-SubCell"/>
</dbReference>
<dbReference type="GO" id="GO:0042742">
    <property type="term" value="P:defense response to bacterium"/>
    <property type="evidence" value="ECO:0007669"/>
    <property type="project" value="UniProtKB-KW"/>
</dbReference>
<dbReference type="GO" id="GO:0045087">
    <property type="term" value="P:innate immune response"/>
    <property type="evidence" value="ECO:0007669"/>
    <property type="project" value="UniProtKB-KW"/>
</dbReference>
<proteinExistence type="evidence at protein level"/>
<reference evidence="5" key="1">
    <citation type="journal article" date="2000" name="Entomol. Sci.">
        <title>Dia pause and immune response: induction of antimicrobial peptides synthesis in the blowfly, Calliphora vicina R.-D. (Diptera: Calliphoridae).</title>
        <authorList>
            <person name="Chernysh S."/>
            <person name="Gordja N.A."/>
            <person name="Simnonenko N.P."/>
        </authorList>
    </citation>
    <scope>PROTEIN SEQUENCE</scope>
    <source>
        <tissue evidence="4">Hemolymph</tissue>
    </source>
</reference>
<reference evidence="5" key="2">
    <citation type="journal article" date="2015" name="PLoS ONE">
        <title>Insect antimicrobial peptide complexes prevent resistance development in bacteria.</title>
        <authorList>
            <person name="Chernysh S."/>
            <person name="Gordya N."/>
            <person name="Suborova T."/>
        </authorList>
    </citation>
    <scope>PROTEIN SEQUENCE</scope>
    <scope>FUNCTION</scope>
    <scope>INDUCTION</scope>
    <scope>MASS SPECTROMETRY</scope>
    <source>
        <tissue evidence="3">Hemolymph</tissue>
    </source>
</reference>
<feature type="chain" id="PRO_0000435611" description="Proline-rich peptide">
    <location>
        <begin position="1"/>
        <end position="22" status="greater than"/>
    </location>
</feature>
<feature type="region of interest" description="Disordered" evidence="1">
    <location>
        <begin position="1"/>
        <end position="22"/>
    </location>
</feature>
<feature type="non-terminal residue" evidence="3">
    <location>
        <position position="22"/>
    </location>
</feature>
<protein>
    <recommendedName>
        <fullName evidence="3">Proline-rich peptide</fullName>
    </recommendedName>
</protein>
<comment type="function">
    <text evidence="2">Antibacterial peptide active against Gram-positive bacterium M.luteus and Gram-negative bacterium E.coli.</text>
</comment>
<comment type="subcellular location">
    <subcellularLocation>
        <location evidence="6">Secreted</location>
    </subcellularLocation>
</comment>
<comment type="induction">
    <text evidence="2">By bacterial infection.</text>
</comment>
<comment type="mass spectrometry"/>
<accession>C0HJY0</accession>
<name>PRP_CALVI</name>
<sequence>FVDRNRIPRSNNGPKIPIISNP</sequence>
<keyword id="KW-0044">Antibiotic</keyword>
<keyword id="KW-0929">Antimicrobial</keyword>
<keyword id="KW-0903">Direct protein sequencing</keyword>
<keyword id="KW-0391">Immunity</keyword>
<keyword id="KW-0399">Innate immunity</keyword>
<keyword id="KW-0964">Secreted</keyword>
<organism evidence="3">
    <name type="scientific">Calliphora vicina</name>
    <name type="common">Blue blowfly</name>
    <name type="synonym">Calliphora erythrocephala</name>
    <dbReference type="NCBI Taxonomy" id="7373"/>
    <lineage>
        <taxon>Eukaryota</taxon>
        <taxon>Metazoa</taxon>
        <taxon>Ecdysozoa</taxon>
        <taxon>Arthropoda</taxon>
        <taxon>Hexapoda</taxon>
        <taxon>Insecta</taxon>
        <taxon>Pterygota</taxon>
        <taxon>Neoptera</taxon>
        <taxon>Endopterygota</taxon>
        <taxon>Diptera</taxon>
        <taxon>Brachycera</taxon>
        <taxon>Muscomorpha</taxon>
        <taxon>Oestroidea</taxon>
        <taxon>Calliphoridae</taxon>
        <taxon>Calliphorinae</taxon>
        <taxon>Calliphora</taxon>
    </lineage>
</organism>
<evidence type="ECO:0000256" key="1">
    <source>
        <dbReference type="SAM" id="MobiDB-lite"/>
    </source>
</evidence>
<evidence type="ECO:0000269" key="2">
    <source>
    </source>
</evidence>
<evidence type="ECO:0000303" key="3">
    <source>
    </source>
</evidence>
<evidence type="ECO:0000303" key="4">
    <source ref="1"/>
</evidence>
<evidence type="ECO:0000305" key="5"/>
<evidence type="ECO:0000305" key="6">
    <source>
    </source>
</evidence>